<sequence>MLSLDLVFSFPAWALLLVLTLLYTLYLATTRLLLSPIRHIPGPTLAALSFWPEFYYDVVQRGQYFRQIDKMHQTYGPLVRINPFEIHIQDPSFYPVLYTGPTRRRHKWLWAARMFGNNTSAFATVRHEHHRLRRSALNPLFSKSAIQRLTPHLQHTLARLCSRLDGFAFTRQDVDLGIGLTAFAADVITEYCFGQSLELIGKDNFGKEWIDMVSAPSELGHLVKQCPWILVVCKWAPKALVRALLPGVALLFQIQERMSAQIQPLVDRAAAVDKPADPLTVFDFLLSSTLPQHEKTVDRLKGEGQTLIGAGTLTTGNALKTIIFHVLNDPDIFRKLRAEVDGALENMDILSMSDTAYLERLPYLSACIKEGLRISYGVTHRLQLIAEEPLIYSGVTIPAGTPVGMTSIFMHDNPVVFPQPREFRPERWFEADFETVQAMNRHFVPFSKGSRMCLGMNLAYAEIYLVLAVLFRRYEISLSGVTREDIEMAHDFFDPAPKEGARGLIVQLQKRG</sequence>
<reference key="1">
    <citation type="journal article" date="2005" name="Nature">
        <title>Sequencing of Aspergillus nidulans and comparative analysis with A. fumigatus and A. oryzae.</title>
        <authorList>
            <person name="Galagan J.E."/>
            <person name="Calvo S.E."/>
            <person name="Cuomo C."/>
            <person name="Ma L.-J."/>
            <person name="Wortman J.R."/>
            <person name="Batzoglou S."/>
            <person name="Lee S.-I."/>
            <person name="Bastuerkmen M."/>
            <person name="Spevak C.C."/>
            <person name="Clutterbuck J."/>
            <person name="Kapitonov V."/>
            <person name="Jurka J."/>
            <person name="Scazzocchio C."/>
            <person name="Farman M.L."/>
            <person name="Butler J."/>
            <person name="Purcell S."/>
            <person name="Harris S."/>
            <person name="Braus G.H."/>
            <person name="Draht O."/>
            <person name="Busch S."/>
            <person name="D'Enfert C."/>
            <person name="Bouchier C."/>
            <person name="Goldman G.H."/>
            <person name="Bell-Pedersen D."/>
            <person name="Griffiths-Jones S."/>
            <person name="Doonan J.H."/>
            <person name="Yu J."/>
            <person name="Vienken K."/>
            <person name="Pain A."/>
            <person name="Freitag M."/>
            <person name="Selker E.U."/>
            <person name="Archer D.B."/>
            <person name="Penalva M.A."/>
            <person name="Oakley B.R."/>
            <person name="Momany M."/>
            <person name="Tanaka T."/>
            <person name="Kumagai T."/>
            <person name="Asai K."/>
            <person name="Machida M."/>
            <person name="Nierman W.C."/>
            <person name="Denning D.W."/>
            <person name="Caddick M.X."/>
            <person name="Hynes M."/>
            <person name="Paoletti M."/>
            <person name="Fischer R."/>
            <person name="Miller B.L."/>
            <person name="Dyer P.S."/>
            <person name="Sachs M.S."/>
            <person name="Osmani S.A."/>
            <person name="Birren B.W."/>
        </authorList>
    </citation>
    <scope>NUCLEOTIDE SEQUENCE [LARGE SCALE GENOMIC DNA]</scope>
    <source>
        <strain>FGSC A4 / ATCC 38163 / CBS 112.46 / NRRL 194 / M139</strain>
    </source>
</reference>
<reference key="2">
    <citation type="journal article" date="2009" name="Fungal Genet. Biol.">
        <title>The 2008 update of the Aspergillus nidulans genome annotation: a community effort.</title>
        <authorList>
            <person name="Wortman J.R."/>
            <person name="Gilsenan J.M."/>
            <person name="Joardar V."/>
            <person name="Deegan J."/>
            <person name="Clutterbuck J."/>
            <person name="Andersen M.R."/>
            <person name="Archer D."/>
            <person name="Bencina M."/>
            <person name="Braus G."/>
            <person name="Coutinho P."/>
            <person name="von Dohren H."/>
            <person name="Doonan J."/>
            <person name="Driessen A.J."/>
            <person name="Durek P."/>
            <person name="Espeso E."/>
            <person name="Fekete E."/>
            <person name="Flipphi M."/>
            <person name="Estrada C.G."/>
            <person name="Geysens S."/>
            <person name="Goldman G."/>
            <person name="de Groot P.W."/>
            <person name="Hansen K."/>
            <person name="Harris S.D."/>
            <person name="Heinekamp T."/>
            <person name="Helmstaedt K."/>
            <person name="Henrissat B."/>
            <person name="Hofmann G."/>
            <person name="Homan T."/>
            <person name="Horio T."/>
            <person name="Horiuchi H."/>
            <person name="James S."/>
            <person name="Jones M."/>
            <person name="Karaffa L."/>
            <person name="Karanyi Z."/>
            <person name="Kato M."/>
            <person name="Keller N."/>
            <person name="Kelly D.E."/>
            <person name="Kiel J.A."/>
            <person name="Kim J.M."/>
            <person name="van der Klei I.J."/>
            <person name="Klis F.M."/>
            <person name="Kovalchuk A."/>
            <person name="Krasevec N."/>
            <person name="Kubicek C.P."/>
            <person name="Liu B."/>
            <person name="Maccabe A."/>
            <person name="Meyer V."/>
            <person name="Mirabito P."/>
            <person name="Miskei M."/>
            <person name="Mos M."/>
            <person name="Mullins J."/>
            <person name="Nelson D.R."/>
            <person name="Nielsen J."/>
            <person name="Oakley B.R."/>
            <person name="Osmani S.A."/>
            <person name="Pakula T."/>
            <person name="Paszewski A."/>
            <person name="Paulsen I."/>
            <person name="Pilsyk S."/>
            <person name="Pocsi I."/>
            <person name="Punt P.J."/>
            <person name="Ram A.F."/>
            <person name="Ren Q."/>
            <person name="Robellet X."/>
            <person name="Robson G."/>
            <person name="Seiboth B."/>
            <person name="van Solingen P."/>
            <person name="Specht T."/>
            <person name="Sun J."/>
            <person name="Taheri-Talesh N."/>
            <person name="Takeshita N."/>
            <person name="Ussery D."/>
            <person name="vanKuyk P.A."/>
            <person name="Visser H."/>
            <person name="van de Vondervoort P.J."/>
            <person name="de Vries R.P."/>
            <person name="Walton J."/>
            <person name="Xiang X."/>
            <person name="Xiong Y."/>
            <person name="Zeng A.P."/>
            <person name="Brandt B.W."/>
            <person name="Cornell M.J."/>
            <person name="van den Hondel C.A."/>
            <person name="Visser J."/>
            <person name="Oliver S.G."/>
            <person name="Turner G."/>
        </authorList>
    </citation>
    <scope>GENOME REANNOTATION</scope>
    <source>
        <strain>FGSC A4 / ATCC 38163 / CBS 112.46 / NRRL 194 / M139</strain>
    </source>
</reference>
<reference key="3">
    <citation type="journal article" date="1983" name="Phytochemistry">
        <title>N-acetyl-6-hydroxytryptophan a natural substrate of a monophenol oxidase from Aspergillus nidulans.</title>
        <authorList>
            <person name="McCorkindale N.J."/>
            <person name="Hayes D."/>
            <person name="Johnston G.A."/>
            <person name="Clutterbuck A.J."/>
        </authorList>
    </citation>
    <scope>FUNCTION</scope>
</reference>
<reference key="4">
    <citation type="journal article" date="1990" name="J. Gen. Microbiol.">
        <title>N-acetyl-6-hydroxytryptophan oxidase, a developmentally controlled phenol oxidase from Aspergillus nidulans.</title>
        <authorList>
            <person name="Birse C.E."/>
            <person name="Clutterbuck A.J."/>
        </authorList>
    </citation>
    <scope>FUNCTION</scope>
</reference>
<reference key="5">
    <citation type="journal article" date="2009" name="Fungal Genet. Biol.">
        <title>The CYPome (Cytochrome P450 complement) of Aspergillus nidulans.</title>
        <authorList>
            <person name="Kelly D.E."/>
            <person name="Krasevec N."/>
            <person name="Mullins J."/>
            <person name="Nelson D.R."/>
        </authorList>
    </citation>
    <scope>IDENTIFICATION</scope>
</reference>
<reference key="6">
    <citation type="journal article" date="2013" name="BMC Microbiol.">
        <title>Comprehensive annotation of secondary metabolite biosynthetic genes and gene clusters of Aspergillus nidulans, A. fumigatus, A. niger and A. oryzae.</title>
        <authorList>
            <person name="Inglis D.O."/>
            <person name="Binkley J."/>
            <person name="Skrzypek M.S."/>
            <person name="Arnaud M.B."/>
            <person name="Cerqueira G.C."/>
            <person name="Shah P."/>
            <person name="Wymore F."/>
            <person name="Wortman J.R."/>
            <person name="Sherlock G."/>
        </authorList>
    </citation>
    <scope>IDENTIFICATION OF THE IVO CLUSTER</scope>
</reference>
<reference key="7">
    <citation type="journal article" date="2017" name="Fungal Genet. Biol.">
        <title>Overexpression of a three-gene conidial pigment biosynthetic pathway in Aspergillus nidulans reveals the first NRPS known to acetylate tryptophan.</title>
        <authorList>
            <person name="Sung C.T."/>
            <person name="Chang S.L."/>
            <person name="Entwistle R."/>
            <person name="Ahn G."/>
            <person name="Lin T.S."/>
            <person name="Petrova V."/>
            <person name="Yeh H.H."/>
            <person name="Praseuth M.B."/>
            <person name="Chiang Y.M."/>
            <person name="Oakley B.R."/>
            <person name="Wang C.C.C."/>
        </authorList>
    </citation>
    <scope>FUNCTION</scope>
    <scope>PATHWAY</scope>
</reference>
<reference key="8">
    <citation type="journal article" date="2019" name="J. Am. Chem. Soc.">
        <title>Complete stereoinversion of L-tryptophan by a fungal single-module nonribosomal peptide synthetase.</title>
        <authorList>
            <person name="Hai Y."/>
            <person name="Jenner M."/>
            <person name="Tang Y."/>
        </authorList>
    </citation>
    <scope>FUNCTION</scope>
</reference>
<name>IVOC_EMENI</name>
<gene>
    <name evidence="9" type="primary">ivoC</name>
    <name evidence="13" type="ORF">ANIA_10573</name>
</gene>
<dbReference type="EC" id="1.-.-.-" evidence="6"/>
<dbReference type="EMBL" id="BN001303">
    <property type="protein sequence ID" value="CBF77085.1"/>
    <property type="molecule type" value="Genomic_DNA"/>
</dbReference>
<dbReference type="SMR" id="C8V7P3"/>
<dbReference type="STRING" id="227321.C8V7P3"/>
<dbReference type="GlyCosmos" id="C8V7P3">
    <property type="glycosylation" value="1 site, No reported glycans"/>
</dbReference>
<dbReference type="EnsemblFungi" id="CBF77085">
    <property type="protein sequence ID" value="CBF77085"/>
    <property type="gene ID" value="ANIA_10573"/>
</dbReference>
<dbReference type="VEuPathDB" id="FungiDB:AN10573"/>
<dbReference type="eggNOG" id="KOG0156">
    <property type="taxonomic scope" value="Eukaryota"/>
</dbReference>
<dbReference type="HOGENOM" id="CLU_001570_14_4_1"/>
<dbReference type="InParanoid" id="C8V7P3"/>
<dbReference type="OMA" id="QFGWLYT"/>
<dbReference type="OrthoDB" id="3945418at2759"/>
<dbReference type="Proteomes" id="UP000000560">
    <property type="component" value="Chromosome III"/>
</dbReference>
<dbReference type="GO" id="GO:0016020">
    <property type="term" value="C:membrane"/>
    <property type="evidence" value="ECO:0007669"/>
    <property type="project" value="UniProtKB-SubCell"/>
</dbReference>
<dbReference type="GO" id="GO:0020037">
    <property type="term" value="F:heme binding"/>
    <property type="evidence" value="ECO:0007669"/>
    <property type="project" value="InterPro"/>
</dbReference>
<dbReference type="GO" id="GO:0005506">
    <property type="term" value="F:iron ion binding"/>
    <property type="evidence" value="ECO:0007669"/>
    <property type="project" value="InterPro"/>
</dbReference>
<dbReference type="GO" id="GO:0004497">
    <property type="term" value="F:monooxygenase activity"/>
    <property type="evidence" value="ECO:0007669"/>
    <property type="project" value="UniProtKB-KW"/>
</dbReference>
<dbReference type="GO" id="GO:0016705">
    <property type="term" value="F:oxidoreductase activity, acting on paired donors, with incorporation or reduction of molecular oxygen"/>
    <property type="evidence" value="ECO:0007669"/>
    <property type="project" value="InterPro"/>
</dbReference>
<dbReference type="GO" id="GO:0044550">
    <property type="term" value="P:secondary metabolite biosynthetic process"/>
    <property type="evidence" value="ECO:0007669"/>
    <property type="project" value="UniProtKB-ARBA"/>
</dbReference>
<dbReference type="CDD" id="cd11062">
    <property type="entry name" value="CYP58-like"/>
    <property type="match status" value="1"/>
</dbReference>
<dbReference type="FunFam" id="1.10.630.10:FF:000069">
    <property type="entry name" value="Cytochrome P450, putative (Eurofung)"/>
    <property type="match status" value="1"/>
</dbReference>
<dbReference type="Gene3D" id="1.10.630.10">
    <property type="entry name" value="Cytochrome P450"/>
    <property type="match status" value="1"/>
</dbReference>
<dbReference type="InterPro" id="IPR001128">
    <property type="entry name" value="Cyt_P450"/>
</dbReference>
<dbReference type="InterPro" id="IPR017972">
    <property type="entry name" value="Cyt_P450_CS"/>
</dbReference>
<dbReference type="InterPro" id="IPR002401">
    <property type="entry name" value="Cyt_P450_E_grp-I"/>
</dbReference>
<dbReference type="InterPro" id="IPR036396">
    <property type="entry name" value="Cyt_P450_sf"/>
</dbReference>
<dbReference type="InterPro" id="IPR050121">
    <property type="entry name" value="Cytochrome_P450_monoxygenase"/>
</dbReference>
<dbReference type="PANTHER" id="PTHR24305">
    <property type="entry name" value="CYTOCHROME P450"/>
    <property type="match status" value="1"/>
</dbReference>
<dbReference type="PANTHER" id="PTHR24305:SF157">
    <property type="entry name" value="N-ACETYLTRYPTOPHAN 6-HYDROXYLASE IVOC-RELATED"/>
    <property type="match status" value="1"/>
</dbReference>
<dbReference type="Pfam" id="PF00067">
    <property type="entry name" value="p450"/>
    <property type="match status" value="1"/>
</dbReference>
<dbReference type="PRINTS" id="PR00463">
    <property type="entry name" value="EP450I"/>
</dbReference>
<dbReference type="PRINTS" id="PR00385">
    <property type="entry name" value="P450"/>
</dbReference>
<dbReference type="SUPFAM" id="SSF48264">
    <property type="entry name" value="Cytochrome P450"/>
    <property type="match status" value="1"/>
</dbReference>
<dbReference type="PROSITE" id="PS00086">
    <property type="entry name" value="CYTOCHROME_P450"/>
    <property type="match status" value="1"/>
</dbReference>
<comment type="function">
    <text evidence="4 5 6 7 8 12">N-acetyltryptophan 6-hydroxylase; part of the pathway that mediates the biosynthesis of the gray-brown conidiophore pigment (PubMed:23617571, PubMed:28108400). The first step of the pathway is performed by the nonribosomal peptide synthetase ivoA that catalyzes ATP-dependent unidirectional stereoinversion of L-tryptophan to D-tryptophan with complete conversion (PubMed:31573806). While the stereoinversion is catalyzed by the epimerization (E) domain of ivoA, the terminal condensation (C) domain stereoselectively hydrolyzes D-tryptophanyl-S-phosphopantetheine thioester and thus represents a non-canonical C domain function (PubMed:31573806). D-tryptophan is acetylated, probably by an endogenous acetyltransferase (Probable). N-acetyltryptophan is further 6-hydroxylated into N-acetyl-6-hydroxytryptophan (AHT) by the cytochrome P450 monooxygenase ivoC (PubMed:28108400). N-acetyl-6-hydroxytryptophan is substrate of the N-acetyl-6-hydroxytryptophan oxidase ivoB to produce the gray-brown conidiophore pigment (PubMed:2126551, PubMed:28108400, Ref.3).</text>
</comment>
<comment type="cofactor">
    <cofactor evidence="1">
        <name>heme</name>
        <dbReference type="ChEBI" id="CHEBI:30413"/>
    </cofactor>
</comment>
<comment type="pathway">
    <text evidence="6">Pigment biosynthesis.</text>
</comment>
<comment type="subcellular location">
    <subcellularLocation>
        <location evidence="2">Membrane</location>
        <topology evidence="2">Single-pass membrane protein</topology>
    </subcellularLocation>
</comment>
<comment type="similarity">
    <text evidence="11">Belongs to the cytochrome P450 family.</text>
</comment>
<protein>
    <recommendedName>
        <fullName evidence="10">N-acetyltryptophan 6-hydroxylase ivoC</fullName>
        <ecNumber evidence="6">1.-.-.-</ecNumber>
    </recommendedName>
    <alternativeName>
        <fullName evidence="9">Benzoate 4-monooxygenase</fullName>
    </alternativeName>
    <alternativeName>
        <fullName evidence="10">Cytochrome P450 monooxygenase ivoC</fullName>
    </alternativeName>
    <alternativeName>
        <fullName evidence="11">Ivory mutation-related protein C</fullName>
    </alternativeName>
</protein>
<keyword id="KW-0325">Glycoprotein</keyword>
<keyword id="KW-0349">Heme</keyword>
<keyword id="KW-0408">Iron</keyword>
<keyword id="KW-0472">Membrane</keyword>
<keyword id="KW-0479">Metal-binding</keyword>
<keyword id="KW-0503">Monooxygenase</keyword>
<keyword id="KW-0560">Oxidoreductase</keyword>
<keyword id="KW-1185">Reference proteome</keyword>
<keyword id="KW-0812">Transmembrane</keyword>
<keyword id="KW-1133">Transmembrane helix</keyword>
<evidence type="ECO:0000250" key="1">
    <source>
        <dbReference type="UniProtKB" id="P04798"/>
    </source>
</evidence>
<evidence type="ECO:0000255" key="2"/>
<evidence type="ECO:0000255" key="3">
    <source>
        <dbReference type="PROSITE-ProRule" id="PRU00498"/>
    </source>
</evidence>
<evidence type="ECO:0000269" key="4">
    <source>
    </source>
</evidence>
<evidence type="ECO:0000269" key="5">
    <source>
    </source>
</evidence>
<evidence type="ECO:0000269" key="6">
    <source>
    </source>
</evidence>
<evidence type="ECO:0000269" key="7">
    <source>
    </source>
</evidence>
<evidence type="ECO:0000269" key="8">
    <source ref="3"/>
</evidence>
<evidence type="ECO:0000303" key="9">
    <source>
    </source>
</evidence>
<evidence type="ECO:0000303" key="10">
    <source>
    </source>
</evidence>
<evidence type="ECO:0000305" key="11"/>
<evidence type="ECO:0000305" key="12">
    <source>
    </source>
</evidence>
<evidence type="ECO:0000312" key="13">
    <source>
        <dbReference type="EMBL" id="CBF77085.1"/>
    </source>
</evidence>
<proteinExistence type="inferred from homology"/>
<feature type="chain" id="PRO_0000444122" description="N-acetyltryptophan 6-hydroxylase ivoC">
    <location>
        <begin position="1"/>
        <end position="512"/>
    </location>
</feature>
<feature type="transmembrane region" description="Helical" evidence="2">
    <location>
        <begin position="6"/>
        <end position="26"/>
    </location>
</feature>
<feature type="binding site" description="axial binding residue" evidence="1">
    <location>
        <position position="453"/>
    </location>
    <ligand>
        <name>heme</name>
        <dbReference type="ChEBI" id="CHEBI:30413"/>
    </ligand>
    <ligandPart>
        <name>Fe</name>
        <dbReference type="ChEBI" id="CHEBI:18248"/>
    </ligandPart>
</feature>
<feature type="glycosylation site" description="N-linked (GlcNAc...) asparagine" evidence="3">
    <location>
        <position position="118"/>
    </location>
</feature>
<organism>
    <name type="scientific">Emericella nidulans (strain FGSC A4 / ATCC 38163 / CBS 112.46 / NRRL 194 / M139)</name>
    <name type="common">Aspergillus nidulans</name>
    <dbReference type="NCBI Taxonomy" id="227321"/>
    <lineage>
        <taxon>Eukaryota</taxon>
        <taxon>Fungi</taxon>
        <taxon>Dikarya</taxon>
        <taxon>Ascomycota</taxon>
        <taxon>Pezizomycotina</taxon>
        <taxon>Eurotiomycetes</taxon>
        <taxon>Eurotiomycetidae</taxon>
        <taxon>Eurotiales</taxon>
        <taxon>Aspergillaceae</taxon>
        <taxon>Aspergillus</taxon>
        <taxon>Aspergillus subgen. Nidulantes</taxon>
    </lineage>
</organism>
<accession>C8V7P3</accession>